<comment type="function">
    <text evidence="1">Required for the formation of a threonylcarbamoyl group on adenosine at position 37 (t(6)A37) in tRNAs that read codons beginning with adenine. Is involved in the transfer of the threonylcarbamoyl moiety of threonylcarbamoyl-AMP (TC-AMP) to the N6 group of A37, together with TsaE and TsaB. TsaD likely plays a direct catalytic role in this reaction.</text>
</comment>
<comment type="catalytic activity">
    <reaction evidence="1">
        <text>L-threonylcarbamoyladenylate + adenosine(37) in tRNA = N(6)-L-threonylcarbamoyladenosine(37) in tRNA + AMP + H(+)</text>
        <dbReference type="Rhea" id="RHEA:37059"/>
        <dbReference type="Rhea" id="RHEA-COMP:10162"/>
        <dbReference type="Rhea" id="RHEA-COMP:10163"/>
        <dbReference type="ChEBI" id="CHEBI:15378"/>
        <dbReference type="ChEBI" id="CHEBI:73682"/>
        <dbReference type="ChEBI" id="CHEBI:74411"/>
        <dbReference type="ChEBI" id="CHEBI:74418"/>
        <dbReference type="ChEBI" id="CHEBI:456215"/>
        <dbReference type="EC" id="2.3.1.234"/>
    </reaction>
</comment>
<comment type="cofactor">
    <cofactor evidence="1">
        <name>Fe(2+)</name>
        <dbReference type="ChEBI" id="CHEBI:29033"/>
    </cofactor>
    <text evidence="1">Binds 1 Fe(2+) ion per subunit.</text>
</comment>
<comment type="subunit">
    <text evidence="2">Forms a hexamer composed of two TsaB, TsaD and TsaE trimers.</text>
</comment>
<comment type="subcellular location">
    <subcellularLocation>
        <location evidence="1">Cytoplasm</location>
    </subcellularLocation>
</comment>
<comment type="similarity">
    <text evidence="1">Belongs to the KAE1 / TsaD family.</text>
</comment>
<sequence>MRVLGIETSCDETAVAVLDDGKNVVVNFTVSQIEVHQKFGGVVPEVAARHHLKNLPILLKKAFEKVPPETVDVVAATYGPGLIGALLVGLSAAKGLAISLEKPFVGVNHVEAHVQAVFLANPDLKPPLVVLMVSGGHTQLMKVDEDYSMEVLGETLDDSAGEAFDKVARLLGLGYPGGPVIDRVAKKGDPEKYSFPRPMLDDDSYNFSFAGLKTSVLYFLQREKGYKVEDVAASFQKAVVDILVEKTFRLARNLGIRKIAFVGGVAANSMLREEVRKRAERWNYEVFFPPLELCTDNALMVAKAGYEKAKRGMFSPLSLNADPNLNV</sequence>
<name>TSAD_THEMA</name>
<proteinExistence type="evidence at protein level"/>
<accession>Q9WXZ2</accession>
<gene>
    <name evidence="1" type="primary">tsaD</name>
    <name type="synonym">gcp</name>
    <name type="ordered locus">TM_0145</name>
</gene>
<protein>
    <recommendedName>
        <fullName evidence="1">tRNA N6-adenosine threonylcarbamoyltransferase</fullName>
        <ecNumber evidence="1">2.3.1.234</ecNumber>
    </recommendedName>
    <alternativeName>
        <fullName evidence="1">N6-L-threonylcarbamoyladenine synthase</fullName>
        <shortName evidence="1">t(6)A synthase</shortName>
    </alternativeName>
    <alternativeName>
        <fullName evidence="1">t(6)A37 threonylcarbamoyladenosine biosynthesis protein TsaD</fullName>
    </alternativeName>
    <alternativeName>
        <fullName evidence="1">tRNA threonylcarbamoyladenosine biosynthesis protein TsaD</fullName>
    </alternativeName>
</protein>
<reference key="1">
    <citation type="journal article" date="1999" name="Nature">
        <title>Evidence for lateral gene transfer between Archaea and Bacteria from genome sequence of Thermotoga maritima.</title>
        <authorList>
            <person name="Nelson K.E."/>
            <person name="Clayton R.A."/>
            <person name="Gill S.R."/>
            <person name="Gwinn M.L."/>
            <person name="Dodson R.J."/>
            <person name="Haft D.H."/>
            <person name="Hickey E.K."/>
            <person name="Peterson J.D."/>
            <person name="Nelson W.C."/>
            <person name="Ketchum K.A."/>
            <person name="McDonald L.A."/>
            <person name="Utterback T.R."/>
            <person name="Malek J.A."/>
            <person name="Linher K.D."/>
            <person name="Garrett M.M."/>
            <person name="Stewart A.M."/>
            <person name="Cotton M.D."/>
            <person name="Pratt M.S."/>
            <person name="Phillips C.A."/>
            <person name="Richardson D.L."/>
            <person name="Heidelberg J.F."/>
            <person name="Sutton G.G."/>
            <person name="Fleischmann R.D."/>
            <person name="Eisen J.A."/>
            <person name="White O."/>
            <person name="Salzberg S.L."/>
            <person name="Smith H.O."/>
            <person name="Venter J.C."/>
            <person name="Fraser C.M."/>
        </authorList>
    </citation>
    <scope>NUCLEOTIDE SEQUENCE [LARGE SCALE GENOMIC DNA]</scope>
    <source>
        <strain>ATCC 43589 / DSM 3109 / JCM 10099 / NBRC 100826 / MSB8</strain>
    </source>
</reference>
<reference key="2">
    <citation type="journal article" date="2018" name="Nucleic Acids Res.">
        <title>The structure of the TsaB/TsaD/TsaE complex reveals an unexpected mechanism for the bacterial t6A tRNA-modification.</title>
        <authorList>
            <person name="Missoury S."/>
            <person name="Plancqueel S."/>
            <person name="Li de la Sierra-Gallay I."/>
            <person name="Zhang W."/>
            <person name="Liger D."/>
            <person name="Durand D."/>
            <person name="Dammak R."/>
            <person name="Collinet B."/>
            <person name="van Tilbeurgh H."/>
        </authorList>
    </citation>
    <scope>X-RAY CRYSTALLOGRAPHY (2.89 ANGSTROMS)</scope>
    <scope>SUBUNIT</scope>
</reference>
<dbReference type="EC" id="2.3.1.234" evidence="1"/>
<dbReference type="EMBL" id="AE000512">
    <property type="protein sequence ID" value="AAD35238.1"/>
    <property type="molecule type" value="Genomic_DNA"/>
</dbReference>
<dbReference type="PIR" id="G72411">
    <property type="entry name" value="G72411"/>
</dbReference>
<dbReference type="RefSeq" id="NP_227960.1">
    <property type="nucleotide sequence ID" value="NC_000853.1"/>
</dbReference>
<dbReference type="RefSeq" id="WP_004082750.1">
    <property type="nucleotide sequence ID" value="NC_000853.1"/>
</dbReference>
<dbReference type="PDB" id="6N9A">
    <property type="method" value="X-ray"/>
    <property type="resolution" value="2.50 A"/>
    <property type="chains" value="D=1-327"/>
</dbReference>
<dbReference type="PDB" id="6NAK">
    <property type="method" value="X-ray"/>
    <property type="resolution" value="3.14 A"/>
    <property type="chains" value="B/G=1-327"/>
</dbReference>
<dbReference type="PDB" id="6S84">
    <property type="method" value="X-ray"/>
    <property type="resolution" value="2.89 A"/>
    <property type="chains" value="A/D=1-327"/>
</dbReference>
<dbReference type="PDBsum" id="6N9A"/>
<dbReference type="PDBsum" id="6NAK"/>
<dbReference type="PDBsum" id="6S84"/>
<dbReference type="SMR" id="Q9WXZ2"/>
<dbReference type="FunCoup" id="Q9WXZ2">
    <property type="interactions" value="438"/>
</dbReference>
<dbReference type="STRING" id="243274.TM_0145"/>
<dbReference type="PaxDb" id="243274-THEMA_04075"/>
<dbReference type="DNASU" id="896976"/>
<dbReference type="EnsemblBacteria" id="AAD35238">
    <property type="protein sequence ID" value="AAD35238"/>
    <property type="gene ID" value="TM_0145"/>
</dbReference>
<dbReference type="KEGG" id="tma:TM0145"/>
<dbReference type="KEGG" id="tmi:THEMA_04075"/>
<dbReference type="KEGG" id="tmm:Tmari_0143"/>
<dbReference type="KEGG" id="tmw:THMA_0141"/>
<dbReference type="eggNOG" id="COG0533">
    <property type="taxonomic scope" value="Bacteria"/>
</dbReference>
<dbReference type="InParanoid" id="Q9WXZ2"/>
<dbReference type="OrthoDB" id="9806197at2"/>
<dbReference type="Proteomes" id="UP000008183">
    <property type="component" value="Chromosome"/>
</dbReference>
<dbReference type="GO" id="GO:0005737">
    <property type="term" value="C:cytoplasm"/>
    <property type="evidence" value="ECO:0007669"/>
    <property type="project" value="UniProtKB-SubCell"/>
</dbReference>
<dbReference type="GO" id="GO:0005506">
    <property type="term" value="F:iron ion binding"/>
    <property type="evidence" value="ECO:0007669"/>
    <property type="project" value="UniProtKB-UniRule"/>
</dbReference>
<dbReference type="GO" id="GO:0061711">
    <property type="term" value="F:N(6)-L-threonylcarbamoyladenine synthase activity"/>
    <property type="evidence" value="ECO:0007669"/>
    <property type="project" value="UniProtKB-EC"/>
</dbReference>
<dbReference type="GO" id="GO:0002949">
    <property type="term" value="P:tRNA threonylcarbamoyladenosine modification"/>
    <property type="evidence" value="ECO:0007669"/>
    <property type="project" value="UniProtKB-UniRule"/>
</dbReference>
<dbReference type="CDD" id="cd24133">
    <property type="entry name" value="ASKHA_NBD_TsaD_bac"/>
    <property type="match status" value="1"/>
</dbReference>
<dbReference type="FunFam" id="3.30.420.40:FF:000012">
    <property type="entry name" value="tRNA N6-adenosine threonylcarbamoyltransferase"/>
    <property type="match status" value="1"/>
</dbReference>
<dbReference type="FunFam" id="3.30.420.40:FF:000040">
    <property type="entry name" value="tRNA N6-adenosine threonylcarbamoyltransferase"/>
    <property type="match status" value="1"/>
</dbReference>
<dbReference type="Gene3D" id="3.30.420.40">
    <property type="match status" value="2"/>
</dbReference>
<dbReference type="HAMAP" id="MF_01445">
    <property type="entry name" value="TsaD"/>
    <property type="match status" value="1"/>
</dbReference>
<dbReference type="InterPro" id="IPR043129">
    <property type="entry name" value="ATPase_NBD"/>
</dbReference>
<dbReference type="InterPro" id="IPR000905">
    <property type="entry name" value="Gcp-like_dom"/>
</dbReference>
<dbReference type="InterPro" id="IPR017861">
    <property type="entry name" value="KAE1/TsaD"/>
</dbReference>
<dbReference type="InterPro" id="IPR022450">
    <property type="entry name" value="TsaD"/>
</dbReference>
<dbReference type="NCBIfam" id="TIGR00329">
    <property type="entry name" value="gcp_kae1"/>
    <property type="match status" value="1"/>
</dbReference>
<dbReference type="NCBIfam" id="TIGR03723">
    <property type="entry name" value="T6A_TsaD_YgjD"/>
    <property type="match status" value="1"/>
</dbReference>
<dbReference type="PANTHER" id="PTHR11735">
    <property type="entry name" value="TRNA N6-ADENOSINE THREONYLCARBAMOYLTRANSFERASE"/>
    <property type="match status" value="1"/>
</dbReference>
<dbReference type="PANTHER" id="PTHR11735:SF6">
    <property type="entry name" value="TRNA N6-ADENOSINE THREONYLCARBAMOYLTRANSFERASE, MITOCHONDRIAL"/>
    <property type="match status" value="1"/>
</dbReference>
<dbReference type="Pfam" id="PF00814">
    <property type="entry name" value="TsaD"/>
    <property type="match status" value="1"/>
</dbReference>
<dbReference type="PRINTS" id="PR00789">
    <property type="entry name" value="OSIALOPTASE"/>
</dbReference>
<dbReference type="SUPFAM" id="SSF53067">
    <property type="entry name" value="Actin-like ATPase domain"/>
    <property type="match status" value="2"/>
</dbReference>
<keyword id="KW-0002">3D-structure</keyword>
<keyword id="KW-0012">Acyltransferase</keyword>
<keyword id="KW-0963">Cytoplasm</keyword>
<keyword id="KW-0408">Iron</keyword>
<keyword id="KW-0479">Metal-binding</keyword>
<keyword id="KW-1185">Reference proteome</keyword>
<keyword id="KW-0808">Transferase</keyword>
<keyword id="KW-0819">tRNA processing</keyword>
<organism>
    <name type="scientific">Thermotoga maritima (strain ATCC 43589 / DSM 3109 / JCM 10099 / NBRC 100826 / MSB8)</name>
    <dbReference type="NCBI Taxonomy" id="243274"/>
    <lineage>
        <taxon>Bacteria</taxon>
        <taxon>Thermotogati</taxon>
        <taxon>Thermotogota</taxon>
        <taxon>Thermotogae</taxon>
        <taxon>Thermotogales</taxon>
        <taxon>Thermotogaceae</taxon>
        <taxon>Thermotoga</taxon>
    </lineage>
</organism>
<evidence type="ECO:0000255" key="1">
    <source>
        <dbReference type="HAMAP-Rule" id="MF_01445"/>
    </source>
</evidence>
<evidence type="ECO:0000269" key="2">
    <source>
    </source>
</evidence>
<evidence type="ECO:0007829" key="3">
    <source>
        <dbReference type="PDB" id="6N9A"/>
    </source>
</evidence>
<evidence type="ECO:0007829" key="4">
    <source>
        <dbReference type="PDB" id="6NAK"/>
    </source>
</evidence>
<evidence type="ECO:0007829" key="5">
    <source>
        <dbReference type="PDB" id="6S84"/>
    </source>
</evidence>
<feature type="chain" id="PRO_0000303595" description="tRNA N6-adenosine threonylcarbamoyltransferase">
    <location>
        <begin position="1"/>
        <end position="327"/>
    </location>
</feature>
<feature type="binding site" evidence="1">
    <location>
        <position position="109"/>
    </location>
    <ligand>
        <name>Fe cation</name>
        <dbReference type="ChEBI" id="CHEBI:24875"/>
    </ligand>
</feature>
<feature type="binding site" evidence="1">
    <location>
        <position position="113"/>
    </location>
    <ligand>
        <name>Fe cation</name>
        <dbReference type="ChEBI" id="CHEBI:24875"/>
    </ligand>
</feature>
<feature type="binding site" evidence="1">
    <location>
        <begin position="132"/>
        <end position="136"/>
    </location>
    <ligand>
        <name>substrate</name>
    </ligand>
</feature>
<feature type="binding site" evidence="1">
    <location>
        <position position="165"/>
    </location>
    <ligand>
        <name>substrate</name>
    </ligand>
</feature>
<feature type="binding site" evidence="1">
    <location>
        <position position="178"/>
    </location>
    <ligand>
        <name>substrate</name>
    </ligand>
</feature>
<feature type="binding site" evidence="1">
    <location>
        <position position="182"/>
    </location>
    <ligand>
        <name>substrate</name>
    </ligand>
</feature>
<feature type="binding site" evidence="1">
    <location>
        <position position="268"/>
    </location>
    <ligand>
        <name>substrate</name>
    </ligand>
</feature>
<feature type="binding site" evidence="1">
    <location>
        <position position="296"/>
    </location>
    <ligand>
        <name>Fe cation</name>
        <dbReference type="ChEBI" id="CHEBI:24875"/>
    </ligand>
</feature>
<feature type="strand" evidence="3">
    <location>
        <begin position="2"/>
        <end position="7"/>
    </location>
</feature>
<feature type="strand" evidence="3">
    <location>
        <begin position="9"/>
        <end position="11"/>
    </location>
</feature>
<feature type="strand" evidence="3">
    <location>
        <begin position="14"/>
        <end position="19"/>
    </location>
</feature>
<feature type="turn" evidence="3">
    <location>
        <begin position="20"/>
        <end position="22"/>
    </location>
</feature>
<feature type="strand" evidence="3">
    <location>
        <begin position="23"/>
        <end position="29"/>
    </location>
</feature>
<feature type="helix" evidence="3">
    <location>
        <begin position="30"/>
        <end position="35"/>
    </location>
</feature>
<feature type="strand" evidence="4">
    <location>
        <begin position="38"/>
        <end position="40"/>
    </location>
</feature>
<feature type="helix" evidence="3">
    <location>
        <begin position="51"/>
        <end position="65"/>
    </location>
</feature>
<feature type="helix" evidence="3">
    <location>
        <begin position="68"/>
        <end position="70"/>
    </location>
</feature>
<feature type="strand" evidence="3">
    <location>
        <begin position="73"/>
        <end position="81"/>
    </location>
</feature>
<feature type="helix" evidence="3">
    <location>
        <begin position="83"/>
        <end position="100"/>
    </location>
</feature>
<feature type="strand" evidence="3">
    <location>
        <begin position="104"/>
        <end position="108"/>
    </location>
</feature>
<feature type="helix" evidence="3">
    <location>
        <begin position="109"/>
        <end position="120"/>
    </location>
</feature>
<feature type="strand" evidence="3">
    <location>
        <begin position="128"/>
        <end position="136"/>
    </location>
</feature>
<feature type="strand" evidence="3">
    <location>
        <begin position="138"/>
        <end position="143"/>
    </location>
</feature>
<feature type="strand" evidence="5">
    <location>
        <begin position="145"/>
        <end position="147"/>
    </location>
</feature>
<feature type="strand" evidence="3">
    <location>
        <begin position="149"/>
        <end position="157"/>
    </location>
</feature>
<feature type="helix" evidence="3">
    <location>
        <begin position="160"/>
        <end position="170"/>
    </location>
</feature>
<feature type="helix" evidence="3">
    <location>
        <begin position="177"/>
        <end position="186"/>
    </location>
</feature>
<feature type="strand" evidence="5">
    <location>
        <begin position="201"/>
        <end position="204"/>
    </location>
</feature>
<feature type="helix" evidence="3">
    <location>
        <begin position="210"/>
        <end position="222"/>
    </location>
</feature>
<feature type="helix" evidence="3">
    <location>
        <begin position="228"/>
        <end position="254"/>
    </location>
</feature>
<feature type="strand" evidence="3">
    <location>
        <begin position="258"/>
        <end position="263"/>
    </location>
</feature>
<feature type="helix" evidence="3">
    <location>
        <begin position="264"/>
        <end position="267"/>
    </location>
</feature>
<feature type="helix" evidence="3">
    <location>
        <begin position="269"/>
        <end position="282"/>
    </location>
</feature>
<feature type="strand" evidence="3">
    <location>
        <begin position="285"/>
        <end position="287"/>
    </location>
</feature>
<feature type="helix" evidence="3">
    <location>
        <begin position="291"/>
        <end position="294"/>
    </location>
</feature>
<feature type="helix" evidence="3">
    <location>
        <begin position="299"/>
        <end position="310"/>
    </location>
</feature>